<dbReference type="EMBL" id="BC072754">
    <property type="protein sequence ID" value="AAH72754.1"/>
    <property type="molecule type" value="mRNA"/>
</dbReference>
<dbReference type="RefSeq" id="NP_001085443.1">
    <property type="nucleotide sequence ID" value="NM_001091974.1"/>
</dbReference>
<dbReference type="SMR" id="Q6GQI8"/>
<dbReference type="DNASU" id="443869"/>
<dbReference type="GeneID" id="443869"/>
<dbReference type="KEGG" id="xla:443869"/>
<dbReference type="AGR" id="Xenbase:XB-GENE-5870309"/>
<dbReference type="CTD" id="443869"/>
<dbReference type="Xenbase" id="XB-GENE-5870309">
    <property type="gene designation" value="mff.L"/>
</dbReference>
<dbReference type="OrthoDB" id="5986838at2759"/>
<dbReference type="Proteomes" id="UP000186698">
    <property type="component" value="Chromosome 5L"/>
</dbReference>
<dbReference type="Bgee" id="443869">
    <property type="expression patterns" value="Expressed in ovary and 19 other cell types or tissues"/>
</dbReference>
<dbReference type="GO" id="GO:0005741">
    <property type="term" value="C:mitochondrial outer membrane"/>
    <property type="evidence" value="ECO:0000318"/>
    <property type="project" value="GO_Central"/>
</dbReference>
<dbReference type="GO" id="GO:0005777">
    <property type="term" value="C:peroxisome"/>
    <property type="evidence" value="ECO:0000250"/>
    <property type="project" value="UniProtKB"/>
</dbReference>
<dbReference type="GO" id="GO:0042803">
    <property type="term" value="F:protein homodimerization activity"/>
    <property type="evidence" value="ECO:0000250"/>
    <property type="project" value="UniProtKB"/>
</dbReference>
<dbReference type="GO" id="GO:0000266">
    <property type="term" value="P:mitochondrial fission"/>
    <property type="evidence" value="ECO:0000250"/>
    <property type="project" value="UniProtKB"/>
</dbReference>
<dbReference type="GO" id="GO:0090141">
    <property type="term" value="P:positive regulation of mitochondrial fission"/>
    <property type="evidence" value="ECO:0000318"/>
    <property type="project" value="GO_Central"/>
</dbReference>
<dbReference type="GO" id="GO:0006626">
    <property type="term" value="P:protein targeting to mitochondrion"/>
    <property type="evidence" value="ECO:0000250"/>
    <property type="project" value="UniProtKB"/>
</dbReference>
<dbReference type="InterPro" id="IPR039433">
    <property type="entry name" value="Mff-like_dom"/>
</dbReference>
<dbReference type="InterPro" id="IPR008518">
    <property type="entry name" value="Mff/Tango-11"/>
</dbReference>
<dbReference type="PANTHER" id="PTHR16501:SF17">
    <property type="entry name" value="MITOCHONDRIAL FISSION FACTOR"/>
    <property type="match status" value="1"/>
</dbReference>
<dbReference type="PANTHER" id="PTHR16501">
    <property type="entry name" value="TRANSPORT AND GOLGI ORGANIZATION PROTEIN 11"/>
    <property type="match status" value="1"/>
</dbReference>
<dbReference type="Pfam" id="PF05644">
    <property type="entry name" value="Miff"/>
    <property type="match status" value="2"/>
</dbReference>
<name>MFFB_XENLA</name>
<accession>Q6GQI8</accession>
<gene>
    <name type="primary">mff-b</name>
</gene>
<evidence type="ECO:0000250" key="1"/>
<evidence type="ECO:0000255" key="2"/>
<evidence type="ECO:0000256" key="3">
    <source>
        <dbReference type="SAM" id="MobiDB-lite"/>
    </source>
</evidence>
<evidence type="ECO:0000305" key="4"/>
<reference key="1">
    <citation type="submission" date="2004-06" db="EMBL/GenBank/DDBJ databases">
        <authorList>
            <consortium name="NIH - Xenopus Gene Collection (XGC) project"/>
        </authorList>
    </citation>
    <scope>NUCLEOTIDE SEQUENCE [LARGE SCALE MRNA]</scope>
    <source>
        <tissue>Ovary</tissue>
    </source>
</reference>
<organism>
    <name type="scientific">Xenopus laevis</name>
    <name type="common">African clawed frog</name>
    <dbReference type="NCBI Taxonomy" id="8355"/>
    <lineage>
        <taxon>Eukaryota</taxon>
        <taxon>Metazoa</taxon>
        <taxon>Chordata</taxon>
        <taxon>Craniata</taxon>
        <taxon>Vertebrata</taxon>
        <taxon>Euteleostomi</taxon>
        <taxon>Amphibia</taxon>
        <taxon>Batrachia</taxon>
        <taxon>Anura</taxon>
        <taxon>Pipoidea</taxon>
        <taxon>Pipidae</taxon>
        <taxon>Xenopodinae</taxon>
        <taxon>Xenopus</taxon>
        <taxon>Xenopus</taxon>
    </lineage>
</organism>
<feature type="chain" id="PRO_0000289191" description="Mitochondrial fission factor homolog B">
    <location>
        <begin position="1"/>
        <end position="239"/>
    </location>
</feature>
<feature type="topological domain" description="Cytoplasmic" evidence="2">
    <location>
        <begin position="1"/>
        <end position="219"/>
    </location>
</feature>
<feature type="transmembrane region" description="Helical; Anchor for type IV membrane protein" evidence="2">
    <location>
        <begin position="220"/>
        <end position="237"/>
    </location>
</feature>
<feature type="topological domain" description="Extracellular" evidence="2">
    <location>
        <begin position="238"/>
        <end position="239"/>
    </location>
</feature>
<feature type="region of interest" description="Disordered" evidence="3">
    <location>
        <begin position="107"/>
        <end position="139"/>
    </location>
</feature>
<feature type="coiled-coil region" evidence="2">
    <location>
        <begin position="184"/>
        <end position="214"/>
    </location>
</feature>
<feature type="compositionally biased region" description="Basic and acidic residues" evidence="3">
    <location>
        <begin position="115"/>
        <end position="130"/>
    </location>
</feature>
<keyword id="KW-0175">Coiled coil</keyword>
<keyword id="KW-0472">Membrane</keyword>
<keyword id="KW-0496">Mitochondrion</keyword>
<keyword id="KW-1000">Mitochondrion outer membrane</keyword>
<keyword id="KW-0576">Peroxisome</keyword>
<keyword id="KW-1185">Reference proteome</keyword>
<keyword id="KW-0812">Transmembrane</keyword>
<keyword id="KW-1133">Transmembrane helix</keyword>
<comment type="function">
    <text evidence="1">Plays a role in mitochondrial and peroxisomal fission. Promotes the recruitment and association of the fission mediator dynamin-related protein 1 (DNM1L) to the mitochondrial surface (By similarity).</text>
</comment>
<comment type="subcellular location">
    <subcellularLocation>
        <location evidence="1">Mitochondrion outer membrane</location>
        <topology evidence="1">Single-pass type IV membrane protein</topology>
    </subcellularLocation>
    <subcellularLocation>
        <location evidence="1">Peroxisome</location>
    </subcellularLocation>
</comment>
<comment type="similarity">
    <text evidence="4">Belongs to the Tango11 family.</text>
</comment>
<sequence>MAEINRMQYEREYTEGISQSMRVPEKLKVAPSNSGVDPKTQPDMPIPGVFMEVPERIVIAGHSEESLFSRPSNLDFIPGANIAALALKTPPRVLTLSERPLDFLDLEGPAPATPHSKEVRSSGHLKRDGLASENSLRQNGQLVRHDSMPILRCGSSTSVPVTHHDNPRSAMSTLDTTLDSTPDDLALADAASLRRQIIKLNRRLLLLEEENKERVKHEMTMYSIIIIFGLLNSWLWFRR</sequence>
<proteinExistence type="evidence at transcript level"/>
<protein>
    <recommendedName>
        <fullName>Mitochondrial fission factor homolog B</fullName>
    </recommendedName>
</protein>